<keyword id="KW-0007">Acetylation</keyword>
<keyword id="KW-0464">Manganese</keyword>
<keyword id="KW-0479">Metal-binding</keyword>
<keyword id="KW-0496">Mitochondrion</keyword>
<keyword id="KW-0944">Nitration</keyword>
<keyword id="KW-0560">Oxidoreductase</keyword>
<keyword id="KW-0832">Ubl conjugation</keyword>
<comment type="function">
    <text evidence="3">Destroys superoxide anion radicals which are normally produced within the cells and which are toxic to biological systems.</text>
</comment>
<comment type="catalytic activity">
    <reaction>
        <text>2 superoxide + 2 H(+) = H2O2 + O2</text>
        <dbReference type="Rhea" id="RHEA:20696"/>
        <dbReference type="ChEBI" id="CHEBI:15378"/>
        <dbReference type="ChEBI" id="CHEBI:15379"/>
        <dbReference type="ChEBI" id="CHEBI:16240"/>
        <dbReference type="ChEBI" id="CHEBI:18421"/>
        <dbReference type="EC" id="1.15.1.1"/>
    </reaction>
</comment>
<comment type="cofactor">
    <cofactor evidence="2">
        <name>Mn(2+)</name>
        <dbReference type="ChEBI" id="CHEBI:29035"/>
    </cofactor>
    <text evidence="2">Binds 1 Mn(2+) ion per subunit.</text>
</comment>
<comment type="subunit">
    <text evidence="1">Homotetramer.</text>
</comment>
<comment type="subcellular location">
    <subcellularLocation>
        <location evidence="1">Mitochondrion matrix</location>
    </subcellularLocation>
</comment>
<comment type="PTM">
    <text evidence="3">Nitrated under oxidative stress. Nitration coupled with oxidation inhibits the catalytic activity.</text>
</comment>
<comment type="PTM">
    <text evidence="2">Acetylation at Lys-98 decreases enzymatic activity. Deacetylated by SIRT3 upon exposure to ionizing radiations or after long fasting (By similarity).</text>
</comment>
<comment type="PTM">
    <text evidence="2">Polyubiquitinated; leading to proteasomal degradation. Deubiquitinated by USP36 which increases protein stability.</text>
</comment>
<comment type="similarity">
    <text evidence="5">Belongs to the iron/manganese superoxide dismutase family.</text>
</comment>
<comment type="sequence caution" evidence="5">
    <conflict type="erroneous initiation">
        <sequence resource="EMBL-CDS" id="BAC20355"/>
    </conflict>
    <text>Extended N-terminus.</text>
</comment>
<organism>
    <name type="scientific">Hylobates lar</name>
    <name type="common">Lar gibbon</name>
    <name type="synonym">White-handed gibbon</name>
    <dbReference type="NCBI Taxonomy" id="9580"/>
    <lineage>
        <taxon>Eukaryota</taxon>
        <taxon>Metazoa</taxon>
        <taxon>Chordata</taxon>
        <taxon>Craniata</taxon>
        <taxon>Vertebrata</taxon>
        <taxon>Euteleostomi</taxon>
        <taxon>Mammalia</taxon>
        <taxon>Eutheria</taxon>
        <taxon>Euarchontoglires</taxon>
        <taxon>Primates</taxon>
        <taxon>Haplorrhini</taxon>
        <taxon>Catarrhini</taxon>
        <taxon>Hylobatidae</taxon>
        <taxon>Hylobates</taxon>
    </lineage>
</organism>
<gene>
    <name type="primary">SOD2</name>
</gene>
<name>SODM_HYLLA</name>
<protein>
    <recommendedName>
        <fullName>Superoxide dismutase [Mn], mitochondrial</fullName>
        <ecNumber>1.15.1.1</ecNumber>
    </recommendedName>
</protein>
<dbReference type="EC" id="1.15.1.1"/>
<dbReference type="EMBL" id="AB087276">
    <property type="protein sequence ID" value="BAC20355.1"/>
    <property type="status" value="ALT_INIT"/>
    <property type="molecule type" value="mRNA"/>
</dbReference>
<dbReference type="SMR" id="Q8HXP5"/>
<dbReference type="GO" id="GO:0005759">
    <property type="term" value="C:mitochondrial matrix"/>
    <property type="evidence" value="ECO:0007669"/>
    <property type="project" value="UniProtKB-SubCell"/>
</dbReference>
<dbReference type="GO" id="GO:0030145">
    <property type="term" value="F:manganese ion binding"/>
    <property type="evidence" value="ECO:0000250"/>
    <property type="project" value="UniProtKB"/>
</dbReference>
<dbReference type="GO" id="GO:0004784">
    <property type="term" value="F:superoxide dismutase activity"/>
    <property type="evidence" value="ECO:0000250"/>
    <property type="project" value="UniProtKB"/>
</dbReference>
<dbReference type="GO" id="GO:0034599">
    <property type="term" value="P:cellular response to oxidative stress"/>
    <property type="evidence" value="ECO:0000250"/>
    <property type="project" value="UniProtKB"/>
</dbReference>
<dbReference type="GO" id="GO:0006357">
    <property type="term" value="P:regulation of transcription by RNA polymerase II"/>
    <property type="evidence" value="ECO:0000250"/>
    <property type="project" value="UniProtKB"/>
</dbReference>
<dbReference type="GO" id="GO:0006801">
    <property type="term" value="P:superoxide metabolic process"/>
    <property type="evidence" value="ECO:0000250"/>
    <property type="project" value="UniProtKB"/>
</dbReference>
<dbReference type="FunFam" id="1.10.287.990:FF:000001">
    <property type="entry name" value="Superoxide dismutase"/>
    <property type="match status" value="1"/>
</dbReference>
<dbReference type="FunFam" id="3.55.40.20:FF:000003">
    <property type="entry name" value="Superoxide dismutase [Mn], mitochondrial"/>
    <property type="match status" value="1"/>
</dbReference>
<dbReference type="Gene3D" id="1.10.287.990">
    <property type="entry name" value="Fe,Mn superoxide dismutase (SOD) domain"/>
    <property type="match status" value="1"/>
</dbReference>
<dbReference type="Gene3D" id="3.55.40.20">
    <property type="entry name" value="Iron/manganese superoxide dismutase, C-terminal domain"/>
    <property type="match status" value="1"/>
</dbReference>
<dbReference type="InterPro" id="IPR050265">
    <property type="entry name" value="Fe/Mn_Superoxide_Dismutase"/>
</dbReference>
<dbReference type="InterPro" id="IPR001189">
    <property type="entry name" value="Mn/Fe_SOD"/>
</dbReference>
<dbReference type="InterPro" id="IPR019833">
    <property type="entry name" value="Mn/Fe_SOD_BS"/>
</dbReference>
<dbReference type="InterPro" id="IPR019832">
    <property type="entry name" value="Mn/Fe_SOD_C"/>
</dbReference>
<dbReference type="InterPro" id="IPR019831">
    <property type="entry name" value="Mn/Fe_SOD_N"/>
</dbReference>
<dbReference type="InterPro" id="IPR036324">
    <property type="entry name" value="Mn/Fe_SOD_N_sf"/>
</dbReference>
<dbReference type="InterPro" id="IPR036314">
    <property type="entry name" value="SOD_C_sf"/>
</dbReference>
<dbReference type="PANTHER" id="PTHR11404">
    <property type="entry name" value="SUPEROXIDE DISMUTASE 2"/>
    <property type="match status" value="1"/>
</dbReference>
<dbReference type="PANTHER" id="PTHR11404:SF6">
    <property type="entry name" value="SUPEROXIDE DISMUTASE [MN], MITOCHONDRIAL"/>
    <property type="match status" value="1"/>
</dbReference>
<dbReference type="Pfam" id="PF02777">
    <property type="entry name" value="Sod_Fe_C"/>
    <property type="match status" value="1"/>
</dbReference>
<dbReference type="Pfam" id="PF00081">
    <property type="entry name" value="Sod_Fe_N"/>
    <property type="match status" value="1"/>
</dbReference>
<dbReference type="PIRSF" id="PIRSF000349">
    <property type="entry name" value="SODismutase"/>
    <property type="match status" value="1"/>
</dbReference>
<dbReference type="PRINTS" id="PR01703">
    <property type="entry name" value="MNSODISMTASE"/>
</dbReference>
<dbReference type="SUPFAM" id="SSF54719">
    <property type="entry name" value="Fe,Mn superoxide dismutase (SOD), C-terminal domain"/>
    <property type="match status" value="1"/>
</dbReference>
<dbReference type="SUPFAM" id="SSF46609">
    <property type="entry name" value="Fe,Mn superoxide dismutase (SOD), N-terminal domain"/>
    <property type="match status" value="1"/>
</dbReference>
<dbReference type="PROSITE" id="PS00088">
    <property type="entry name" value="SOD_MN"/>
    <property type="match status" value="1"/>
</dbReference>
<reference key="1">
    <citation type="journal article" date="2002" name="Gene">
        <title>Structure, molecular evolution, and gene expression of primate superoxide dismutases.</title>
        <authorList>
            <person name="Fukuhara R."/>
            <person name="Tezuka T."/>
            <person name="Kageyama T."/>
        </authorList>
    </citation>
    <scope>NUCLEOTIDE SEQUENCE [MRNA]</scope>
</reference>
<proteinExistence type="evidence at transcript level"/>
<accession>Q8HXP5</accession>
<feature type="chain" id="PRO_0000159952" description="Superoxide dismutase [Mn], mitochondrial">
    <location>
        <begin position="1"/>
        <end position="198"/>
    </location>
</feature>
<feature type="binding site" evidence="1">
    <location>
        <position position="26"/>
    </location>
    <ligand>
        <name>Mn(2+)</name>
        <dbReference type="ChEBI" id="CHEBI:29035"/>
    </ligand>
</feature>
<feature type="binding site" evidence="1">
    <location>
        <position position="74"/>
    </location>
    <ligand>
        <name>Mn(2+)</name>
        <dbReference type="ChEBI" id="CHEBI:29035"/>
    </ligand>
</feature>
<feature type="binding site" evidence="1">
    <location>
        <position position="159"/>
    </location>
    <ligand>
        <name>Mn(2+)</name>
        <dbReference type="ChEBI" id="CHEBI:29035"/>
    </ligand>
</feature>
<feature type="binding site" evidence="1">
    <location>
        <position position="163"/>
    </location>
    <ligand>
        <name>Mn(2+)</name>
        <dbReference type="ChEBI" id="CHEBI:29035"/>
    </ligand>
</feature>
<feature type="modified residue" description="3'-nitrotyrosine" evidence="2">
    <location>
        <position position="34"/>
    </location>
</feature>
<feature type="modified residue" description="N6-acetyllysine; alternate" evidence="2">
    <location>
        <position position="44"/>
    </location>
</feature>
<feature type="modified residue" description="N6-succinyllysine; alternate" evidence="4">
    <location>
        <position position="44"/>
    </location>
</feature>
<feature type="modified residue" description="N6-acetyllysine; alternate" evidence="4">
    <location>
        <position position="51"/>
    </location>
</feature>
<feature type="modified residue" description="N6-succinyllysine; alternate" evidence="4">
    <location>
        <position position="51"/>
    </location>
</feature>
<feature type="modified residue" description="N6-acetyllysine" evidence="4">
    <location>
        <position position="90"/>
    </location>
</feature>
<feature type="modified residue" description="N6-acetyllysine; alternate" evidence="4">
    <location>
        <position position="98"/>
    </location>
</feature>
<feature type="modified residue" description="N6-succinyllysine; alternate" evidence="4">
    <location>
        <position position="98"/>
    </location>
</feature>
<feature type="modified residue" description="N6-acetyllysine; alternate" evidence="2">
    <location>
        <position position="106"/>
    </location>
</feature>
<feature type="modified residue" description="N6-succinyllysine; alternate" evidence="4">
    <location>
        <position position="106"/>
    </location>
</feature>
<feature type="modified residue" description="N6-acetyllysine" evidence="4">
    <location>
        <position position="178"/>
    </location>
</feature>
<sequence>KHSLPDLPYDYGALEPHINAQIMQLHHSKHHAAYVNNLNVTEEKYQEALAKGDVTAQIALQPALKFNGGGHINHSIFWTNLSPNGGGEPKGELLEAIKRDFGSFDKFKEKLTATSVGVQGSGWGWLGFNKERGHLQIAACPNQDPLQGTTGLIPLLGIDVWEHAYYLQYKNVRPDYLKAIWNVINWENVTERYMACKK</sequence>
<evidence type="ECO:0000250" key="1"/>
<evidence type="ECO:0000250" key="2">
    <source>
        <dbReference type="UniProtKB" id="P04179"/>
    </source>
</evidence>
<evidence type="ECO:0000250" key="3">
    <source>
        <dbReference type="UniProtKB" id="P07895"/>
    </source>
</evidence>
<evidence type="ECO:0000250" key="4">
    <source>
        <dbReference type="UniProtKB" id="P09671"/>
    </source>
</evidence>
<evidence type="ECO:0000305" key="5"/>